<keyword id="KW-1015">Disulfide bond</keyword>
<keyword id="KW-0325">Glycoprotein</keyword>
<keyword id="KW-0326">Glycosidase</keyword>
<keyword id="KW-0378">Hydrolase</keyword>
<keyword id="KW-1185">Reference proteome</keyword>
<keyword id="KW-0732">Signal</keyword>
<proteinExistence type="evidence at transcript level"/>
<comment type="catalytic activity">
    <reaction evidence="1">
        <text>Hydrolysis of terminal, non-reducing beta-D-glucosyl residues with release of beta-D-glucose.</text>
        <dbReference type="EC" id="3.2.1.21"/>
    </reaction>
</comment>
<comment type="induction">
    <text evidence="7 8">By sucrose starvation, dark and senescence.</text>
</comment>
<comment type="similarity">
    <text evidence="13">Belongs to the glycosyl hydrolase 1 family.</text>
</comment>
<comment type="sequence caution" evidence="13">
    <conflict type="miscellaneous discrepancy">
        <sequence resource="EMBL-CDS" id="AAK32907"/>
    </conflict>
    <text>Intron retention.</text>
</comment>
<comment type="sequence caution" evidence="13">
    <conflict type="miscellaneous discrepancy">
        <sequence resource="EMBL-CDS" id="AAM91436"/>
    </conflict>
    <text>Intron retention.</text>
</comment>
<sequence>MAKGSWFFIILFIISMLENMINSLELDRHSFPDDFIFGTAASAFQYEGATSEGGKSPTIWDHFSLTYPERTKMHNADVAIDFYHRYKDDIKLMKELNMDAFRFSISWSRLIPSGKLKDGVNKEGVQFYKDLIDELLANDIQPSMTLYHWDHPQSLEDEYGGFLSPKIVEDFRDFARICFEEFGDKVKMWTTINEPYIMTVAGYDQGNKAAGRCSKWVNEKCQAGDSSTEPYIVSHHTLLAHAAAVEEFRKCEKTSHDGQIGIVLSPRWFEPYHSDSTDDKEAAERALAFEIGWHLDPVIHGDYPEIVKKYAGNKLPSFTVEQSKMLQNSSDFVGINYYTARFAAHLPHIDPEKPRFKTDHHVEWKLTNHSGHIIGPGEERGFLFSHPEGLRKVLNYIKERYNNMPVYIKENGINDNDDGTKPREEIVKDTFRIEYHKTHFEELHKAIVEDGCDVRGYYAWSLMDNFEWEHGYTARFGLYYVDFVNGLKRYPKDSVKWFKRFLKKSVVGESNKEEVEEMSRAEGNKTFKGFEESAGFFASFMAMNQSRRDEENNRCSFDFPHTHFGVLQGIENPSSFY</sequence>
<gene>
    <name evidence="11" type="primary">BGLU30</name>
    <name evidence="9 10" type="synonym">DIN2</name>
    <name evidence="12" type="synonym">SRG2</name>
    <name evidence="14" type="ordered locus">At3g60140</name>
    <name evidence="15" type="ORF">T2O9.120</name>
</gene>
<dbReference type="EC" id="3.2.1.21" evidence="1"/>
<dbReference type="EMBL" id="AF159376">
    <property type="protein sequence ID" value="AAG23719.1"/>
    <property type="molecule type" value="mRNA"/>
</dbReference>
<dbReference type="EMBL" id="AL138658">
    <property type="protein sequence ID" value="CAB75929.1"/>
    <property type="molecule type" value="Genomic_DNA"/>
</dbReference>
<dbReference type="EMBL" id="CP002686">
    <property type="protein sequence ID" value="AEE80017.1"/>
    <property type="molecule type" value="Genomic_DNA"/>
</dbReference>
<dbReference type="EMBL" id="AF367320">
    <property type="protein sequence ID" value="AAK32907.1"/>
    <property type="status" value="ALT_SEQ"/>
    <property type="molecule type" value="mRNA"/>
</dbReference>
<dbReference type="EMBL" id="AY133606">
    <property type="protein sequence ID" value="AAM91436.1"/>
    <property type="status" value="ALT_SEQ"/>
    <property type="molecule type" value="mRNA"/>
</dbReference>
<dbReference type="EMBL" id="X82623">
    <property type="protein sequence ID" value="CAA57943.1"/>
    <property type="molecule type" value="mRNA"/>
</dbReference>
<dbReference type="EMBL" id="X82624">
    <property type="protein sequence ID" value="CAA57944.1"/>
    <property type="molecule type" value="mRNA"/>
</dbReference>
<dbReference type="PIR" id="T47838">
    <property type="entry name" value="T47838"/>
</dbReference>
<dbReference type="RefSeq" id="NP_191573.1">
    <property type="nucleotide sequence ID" value="NM_115877.4"/>
</dbReference>
<dbReference type="SMR" id="Q9M1C9"/>
<dbReference type="FunCoup" id="Q9M1C9">
    <property type="interactions" value="427"/>
</dbReference>
<dbReference type="STRING" id="3702.Q9M1C9"/>
<dbReference type="CAZy" id="GH1">
    <property type="family name" value="Glycoside Hydrolase Family 1"/>
</dbReference>
<dbReference type="GlyCosmos" id="Q9M1C9">
    <property type="glycosylation" value="4 sites, No reported glycans"/>
</dbReference>
<dbReference type="GlyGen" id="Q9M1C9">
    <property type="glycosylation" value="4 sites"/>
</dbReference>
<dbReference type="MetOSite" id="Q9M1C9"/>
<dbReference type="PaxDb" id="3702-AT3G60140.1"/>
<dbReference type="ProteomicsDB" id="240764"/>
<dbReference type="EnsemblPlants" id="AT3G60140.1">
    <property type="protein sequence ID" value="AT3G60140.1"/>
    <property type="gene ID" value="AT3G60140"/>
</dbReference>
<dbReference type="GeneID" id="825184"/>
<dbReference type="Gramene" id="AT3G60140.1">
    <property type="protein sequence ID" value="AT3G60140.1"/>
    <property type="gene ID" value="AT3G60140"/>
</dbReference>
<dbReference type="KEGG" id="ath:AT3G60140"/>
<dbReference type="Araport" id="AT3G60140"/>
<dbReference type="TAIR" id="AT3G60140">
    <property type="gene designation" value="DIN2"/>
</dbReference>
<dbReference type="eggNOG" id="KOG0626">
    <property type="taxonomic scope" value="Eukaryota"/>
</dbReference>
<dbReference type="HOGENOM" id="CLU_001859_1_0_1"/>
<dbReference type="InParanoid" id="Q9M1C9"/>
<dbReference type="OMA" id="DSPADIN"/>
<dbReference type="PhylomeDB" id="Q9M1C9"/>
<dbReference type="BioCyc" id="ARA:AT3G60140-MONOMER"/>
<dbReference type="PRO" id="PR:Q9M1C9"/>
<dbReference type="Proteomes" id="UP000006548">
    <property type="component" value="Chromosome 3"/>
</dbReference>
<dbReference type="ExpressionAtlas" id="Q9M1C9">
    <property type="expression patterns" value="baseline and differential"/>
</dbReference>
<dbReference type="GO" id="GO:0008422">
    <property type="term" value="F:beta-glucosidase activity"/>
    <property type="evidence" value="ECO:0007669"/>
    <property type="project" value="UniProtKB-EC"/>
</dbReference>
<dbReference type="GO" id="GO:0005975">
    <property type="term" value="P:carbohydrate metabolic process"/>
    <property type="evidence" value="ECO:0007669"/>
    <property type="project" value="InterPro"/>
</dbReference>
<dbReference type="FunFam" id="3.20.20.80:FF:000022">
    <property type="entry name" value="Beta-glucosidase 11"/>
    <property type="match status" value="1"/>
</dbReference>
<dbReference type="Gene3D" id="3.20.20.80">
    <property type="entry name" value="Glycosidases"/>
    <property type="match status" value="1"/>
</dbReference>
<dbReference type="InterPro" id="IPR001360">
    <property type="entry name" value="Glyco_hydro_1"/>
</dbReference>
<dbReference type="InterPro" id="IPR033132">
    <property type="entry name" value="Glyco_hydro_1_N_CS"/>
</dbReference>
<dbReference type="InterPro" id="IPR017853">
    <property type="entry name" value="Glycoside_hydrolase_SF"/>
</dbReference>
<dbReference type="PANTHER" id="PTHR10353:SF164">
    <property type="entry name" value="BETA-GLUCOSIDASE 30"/>
    <property type="match status" value="1"/>
</dbReference>
<dbReference type="PANTHER" id="PTHR10353">
    <property type="entry name" value="GLYCOSYL HYDROLASE"/>
    <property type="match status" value="1"/>
</dbReference>
<dbReference type="Pfam" id="PF00232">
    <property type="entry name" value="Glyco_hydro_1"/>
    <property type="match status" value="1"/>
</dbReference>
<dbReference type="PRINTS" id="PR00131">
    <property type="entry name" value="GLHYDRLASE1"/>
</dbReference>
<dbReference type="SUPFAM" id="SSF51445">
    <property type="entry name" value="(Trans)glycosidases"/>
    <property type="match status" value="1"/>
</dbReference>
<dbReference type="PROSITE" id="PS00653">
    <property type="entry name" value="GLYCOSYL_HYDROL_F1_2"/>
    <property type="match status" value="1"/>
</dbReference>
<organism>
    <name type="scientific">Arabidopsis thaliana</name>
    <name type="common">Mouse-ear cress</name>
    <dbReference type="NCBI Taxonomy" id="3702"/>
    <lineage>
        <taxon>Eukaryota</taxon>
        <taxon>Viridiplantae</taxon>
        <taxon>Streptophyta</taxon>
        <taxon>Embryophyta</taxon>
        <taxon>Tracheophyta</taxon>
        <taxon>Spermatophyta</taxon>
        <taxon>Magnoliopsida</taxon>
        <taxon>eudicotyledons</taxon>
        <taxon>Gunneridae</taxon>
        <taxon>Pentapetalae</taxon>
        <taxon>rosids</taxon>
        <taxon>malvids</taxon>
        <taxon>Brassicales</taxon>
        <taxon>Brassicaceae</taxon>
        <taxon>Camelineae</taxon>
        <taxon>Arabidopsis</taxon>
    </lineage>
</organism>
<name>BGL30_ARATH</name>
<feature type="signal peptide" evidence="5">
    <location>
        <begin position="1"/>
        <end position="23"/>
    </location>
</feature>
<feature type="chain" id="PRO_0000389592" description="Beta-glucosidase 30">
    <location>
        <begin position="24"/>
        <end position="577"/>
    </location>
</feature>
<feature type="active site" description="Proton donor" evidence="3">
    <location>
        <position position="194"/>
    </location>
</feature>
<feature type="active site" description="Nucleophile" evidence="3">
    <location>
        <position position="410"/>
    </location>
</feature>
<feature type="binding site" evidence="3">
    <location>
        <position position="45"/>
    </location>
    <ligand>
        <name>a beta-D-glucoside</name>
        <dbReference type="ChEBI" id="CHEBI:22798"/>
    </ligand>
</feature>
<feature type="binding site" evidence="3">
    <location>
        <position position="148"/>
    </location>
    <ligand>
        <name>a beta-D-glucoside</name>
        <dbReference type="ChEBI" id="CHEBI:22798"/>
    </ligand>
</feature>
<feature type="binding site" evidence="3">
    <location>
        <begin position="193"/>
        <end position="194"/>
    </location>
    <ligand>
        <name>a beta-D-glucoside</name>
        <dbReference type="ChEBI" id="CHEBI:22798"/>
    </ligand>
</feature>
<feature type="binding site" evidence="3">
    <location>
        <position position="338"/>
    </location>
    <ligand>
        <name>a beta-D-glucoside</name>
        <dbReference type="ChEBI" id="CHEBI:22798"/>
    </ligand>
</feature>
<feature type="binding site" evidence="4">
    <location>
        <position position="410"/>
    </location>
    <ligand>
        <name>a beta-D-glucoside</name>
        <dbReference type="ChEBI" id="CHEBI:22798"/>
    </ligand>
</feature>
<feature type="binding site" evidence="3">
    <location>
        <position position="460"/>
    </location>
    <ligand>
        <name>a beta-D-glucoside</name>
        <dbReference type="ChEBI" id="CHEBI:22798"/>
    </ligand>
</feature>
<feature type="binding site" evidence="3">
    <location>
        <begin position="467"/>
        <end position="468"/>
    </location>
    <ligand>
        <name>a beta-D-glucoside</name>
        <dbReference type="ChEBI" id="CHEBI:22798"/>
    </ligand>
</feature>
<feature type="binding site" evidence="2">
    <location>
        <position position="476"/>
    </location>
    <ligand>
        <name>a beta-D-glucoside</name>
        <dbReference type="ChEBI" id="CHEBI:22798"/>
    </ligand>
</feature>
<feature type="glycosylation site" description="N-linked (GlcNAc...) asparagine" evidence="6">
    <location>
        <position position="328"/>
    </location>
</feature>
<feature type="glycosylation site" description="N-linked (GlcNAc...) asparagine" evidence="6">
    <location>
        <position position="368"/>
    </location>
</feature>
<feature type="glycosylation site" description="N-linked (GlcNAc...) asparagine" evidence="6">
    <location>
        <position position="524"/>
    </location>
</feature>
<feature type="glycosylation site" description="N-linked (GlcNAc...) asparagine" evidence="6">
    <location>
        <position position="544"/>
    </location>
</feature>
<feature type="disulfide bond" evidence="3">
    <location>
        <begin position="213"/>
        <end position="221"/>
    </location>
</feature>
<feature type="sequence conflict" description="In Ref. 1; AAG23719." evidence="13" ref="1">
    <original>E</original>
    <variation>K</variation>
    <location>
        <position position="52"/>
    </location>
</feature>
<feature type="sequence conflict" description="In Ref. 4; AAK32907." evidence="13" ref="4">
    <original>SLT</original>
    <variation>TLS</variation>
    <location>
        <begin position="64"/>
        <end position="66"/>
    </location>
</feature>
<feature type="sequence conflict" description="In Ref. 4; AAK32907/AAM91436." evidence="13" ref="4">
    <original>D</original>
    <variation>G</variation>
    <location>
        <position position="89"/>
    </location>
</feature>
<feature type="sequence conflict" description="In Ref. 4; AAK32907." evidence="13" ref="4">
    <original>S</original>
    <variation>A</variation>
    <location>
        <position position="108"/>
    </location>
</feature>
<feature type="sequence conflict" description="In Ref. 4; AAK32907." evidence="13" ref="4">
    <original>S</original>
    <variation>R</variation>
    <location>
        <position position="227"/>
    </location>
</feature>
<feature type="sequence conflict" description="In Ref. 4; AAK32907." evidence="13" ref="4">
    <original>F</original>
    <variation>I</variation>
    <location>
        <position position="248"/>
    </location>
</feature>
<feature type="sequence conflict" description="In Ref. 4; AAK32907/AAM91436." evidence="13" ref="4">
    <original>G</original>
    <variation>R</variation>
    <location>
        <position position="334"/>
    </location>
</feature>
<evidence type="ECO:0000250" key="1">
    <source>
        <dbReference type="UniProtKB" id="O64879"/>
    </source>
</evidence>
<evidence type="ECO:0000250" key="2">
    <source>
        <dbReference type="UniProtKB" id="Q1XH05"/>
    </source>
</evidence>
<evidence type="ECO:0000250" key="3">
    <source>
        <dbReference type="UniProtKB" id="Q7XSK0"/>
    </source>
</evidence>
<evidence type="ECO:0000250" key="4">
    <source>
        <dbReference type="UniProtKB" id="Q9SPP9"/>
    </source>
</evidence>
<evidence type="ECO:0000255" key="5"/>
<evidence type="ECO:0000255" key="6">
    <source>
        <dbReference type="PROSITE-ProRule" id="PRU00498"/>
    </source>
</evidence>
<evidence type="ECO:0000269" key="7">
    <source>
    </source>
</evidence>
<evidence type="ECO:0000269" key="8">
    <source>
    </source>
</evidence>
<evidence type="ECO:0000303" key="9">
    <source>
    </source>
</evidence>
<evidence type="ECO:0000303" key="10">
    <source>
    </source>
</evidence>
<evidence type="ECO:0000303" key="11">
    <source>
    </source>
</evidence>
<evidence type="ECO:0000303" key="12">
    <source>
    </source>
</evidence>
<evidence type="ECO:0000305" key="13"/>
<evidence type="ECO:0000312" key="14">
    <source>
        <dbReference type="Araport" id="AT3G60140"/>
    </source>
</evidence>
<evidence type="ECO:0000312" key="15">
    <source>
        <dbReference type="EMBL" id="CAB75929.1"/>
    </source>
</evidence>
<reference key="1">
    <citation type="journal article" date="2000" name="Plant Physiol.">
        <title>Multiple signaling pathways in gene expression during sugar starvation. Pharmacological analysis of din gene expression in suspension-cultured cells of Arabidopsis.</title>
        <authorList>
            <person name="Fujiki Y."/>
            <person name="Ito M."/>
            <person name="Nishida I."/>
            <person name="Watanabe A."/>
        </authorList>
    </citation>
    <scope>NUCLEOTIDE SEQUENCE [MRNA]</scope>
    <scope>INDUCTION</scope>
</reference>
<reference key="2">
    <citation type="journal article" date="2000" name="Nature">
        <title>Sequence and analysis of chromosome 3 of the plant Arabidopsis thaliana.</title>
        <authorList>
            <person name="Salanoubat M."/>
            <person name="Lemcke K."/>
            <person name="Rieger M."/>
            <person name="Ansorge W."/>
            <person name="Unseld M."/>
            <person name="Fartmann B."/>
            <person name="Valle G."/>
            <person name="Bloecker H."/>
            <person name="Perez-Alonso M."/>
            <person name="Obermaier B."/>
            <person name="Delseny M."/>
            <person name="Boutry M."/>
            <person name="Grivell L.A."/>
            <person name="Mache R."/>
            <person name="Puigdomenech P."/>
            <person name="De Simone V."/>
            <person name="Choisne N."/>
            <person name="Artiguenave F."/>
            <person name="Robert C."/>
            <person name="Brottier P."/>
            <person name="Wincker P."/>
            <person name="Cattolico L."/>
            <person name="Weissenbach J."/>
            <person name="Saurin W."/>
            <person name="Quetier F."/>
            <person name="Schaefer M."/>
            <person name="Mueller-Auer S."/>
            <person name="Gabel C."/>
            <person name="Fuchs M."/>
            <person name="Benes V."/>
            <person name="Wurmbach E."/>
            <person name="Drzonek H."/>
            <person name="Erfle H."/>
            <person name="Jordan N."/>
            <person name="Bangert S."/>
            <person name="Wiedelmann R."/>
            <person name="Kranz H."/>
            <person name="Voss H."/>
            <person name="Holland R."/>
            <person name="Brandt P."/>
            <person name="Nyakatura G."/>
            <person name="Vezzi A."/>
            <person name="D'Angelo M."/>
            <person name="Pallavicini A."/>
            <person name="Toppo S."/>
            <person name="Simionati B."/>
            <person name="Conrad A."/>
            <person name="Hornischer K."/>
            <person name="Kauer G."/>
            <person name="Loehnert T.-H."/>
            <person name="Nordsiek G."/>
            <person name="Reichelt J."/>
            <person name="Scharfe M."/>
            <person name="Schoen O."/>
            <person name="Bargues M."/>
            <person name="Terol J."/>
            <person name="Climent J."/>
            <person name="Navarro P."/>
            <person name="Collado C."/>
            <person name="Perez-Perez A."/>
            <person name="Ottenwaelder B."/>
            <person name="Duchemin D."/>
            <person name="Cooke R."/>
            <person name="Laudie M."/>
            <person name="Berger-Llauro C."/>
            <person name="Purnelle B."/>
            <person name="Masuy D."/>
            <person name="de Haan M."/>
            <person name="Maarse A.C."/>
            <person name="Alcaraz J.-P."/>
            <person name="Cottet A."/>
            <person name="Casacuberta E."/>
            <person name="Monfort A."/>
            <person name="Argiriou A."/>
            <person name="Flores M."/>
            <person name="Liguori R."/>
            <person name="Vitale D."/>
            <person name="Mannhaupt G."/>
            <person name="Haase D."/>
            <person name="Schoof H."/>
            <person name="Rudd S."/>
            <person name="Zaccaria P."/>
            <person name="Mewes H.-W."/>
            <person name="Mayer K.F.X."/>
            <person name="Kaul S."/>
            <person name="Town C.D."/>
            <person name="Koo H.L."/>
            <person name="Tallon L.J."/>
            <person name="Jenkins J."/>
            <person name="Rooney T."/>
            <person name="Rizzo M."/>
            <person name="Walts A."/>
            <person name="Utterback T."/>
            <person name="Fujii C.Y."/>
            <person name="Shea T.P."/>
            <person name="Creasy T.H."/>
            <person name="Haas B."/>
            <person name="Maiti R."/>
            <person name="Wu D."/>
            <person name="Peterson J."/>
            <person name="Van Aken S."/>
            <person name="Pai G."/>
            <person name="Militscher J."/>
            <person name="Sellers P."/>
            <person name="Gill J.E."/>
            <person name="Feldblyum T.V."/>
            <person name="Preuss D."/>
            <person name="Lin X."/>
            <person name="Nierman W.C."/>
            <person name="Salzberg S.L."/>
            <person name="White O."/>
            <person name="Venter J.C."/>
            <person name="Fraser C.M."/>
            <person name="Kaneko T."/>
            <person name="Nakamura Y."/>
            <person name="Sato S."/>
            <person name="Kato T."/>
            <person name="Asamizu E."/>
            <person name="Sasamoto S."/>
            <person name="Kimura T."/>
            <person name="Idesawa K."/>
            <person name="Kawashima K."/>
            <person name="Kishida Y."/>
            <person name="Kiyokawa C."/>
            <person name="Kohara M."/>
            <person name="Matsumoto M."/>
            <person name="Matsuno A."/>
            <person name="Muraki A."/>
            <person name="Nakayama S."/>
            <person name="Nakazaki N."/>
            <person name="Shinpo S."/>
            <person name="Takeuchi C."/>
            <person name="Wada T."/>
            <person name="Watanabe A."/>
            <person name="Yamada M."/>
            <person name="Yasuda M."/>
            <person name="Tabata S."/>
        </authorList>
    </citation>
    <scope>NUCLEOTIDE SEQUENCE [LARGE SCALE GENOMIC DNA]</scope>
    <source>
        <strain>cv. Columbia</strain>
    </source>
</reference>
<reference key="3">
    <citation type="journal article" date="2017" name="Plant J.">
        <title>Araport11: a complete reannotation of the Arabidopsis thaliana reference genome.</title>
        <authorList>
            <person name="Cheng C.Y."/>
            <person name="Krishnakumar V."/>
            <person name="Chan A.P."/>
            <person name="Thibaud-Nissen F."/>
            <person name="Schobel S."/>
            <person name="Town C.D."/>
        </authorList>
    </citation>
    <scope>GENOME REANNOTATION</scope>
    <source>
        <strain>cv. Columbia</strain>
    </source>
</reference>
<reference key="4">
    <citation type="journal article" date="2003" name="Science">
        <title>Empirical analysis of transcriptional activity in the Arabidopsis genome.</title>
        <authorList>
            <person name="Yamada K."/>
            <person name="Lim J."/>
            <person name="Dale J.M."/>
            <person name="Chen H."/>
            <person name="Shinn P."/>
            <person name="Palm C.J."/>
            <person name="Southwick A.M."/>
            <person name="Wu H.C."/>
            <person name="Kim C.J."/>
            <person name="Nguyen M."/>
            <person name="Pham P.K."/>
            <person name="Cheuk R.F."/>
            <person name="Karlin-Newmann G."/>
            <person name="Liu S.X."/>
            <person name="Lam B."/>
            <person name="Sakano H."/>
            <person name="Wu T."/>
            <person name="Yu G."/>
            <person name="Miranda M."/>
            <person name="Quach H.L."/>
            <person name="Tripp M."/>
            <person name="Chang C.H."/>
            <person name="Lee J.M."/>
            <person name="Toriumi M.J."/>
            <person name="Chan M.M."/>
            <person name="Tang C.C."/>
            <person name="Onodera C.S."/>
            <person name="Deng J.M."/>
            <person name="Akiyama K."/>
            <person name="Ansari Y."/>
            <person name="Arakawa T."/>
            <person name="Banh J."/>
            <person name="Banno F."/>
            <person name="Bowser L."/>
            <person name="Brooks S.Y."/>
            <person name="Carninci P."/>
            <person name="Chao Q."/>
            <person name="Choy N."/>
            <person name="Enju A."/>
            <person name="Goldsmith A.D."/>
            <person name="Gurjal M."/>
            <person name="Hansen N.F."/>
            <person name="Hayashizaki Y."/>
            <person name="Johnson-Hopson C."/>
            <person name="Hsuan V.W."/>
            <person name="Iida K."/>
            <person name="Karnes M."/>
            <person name="Khan S."/>
            <person name="Koesema E."/>
            <person name="Ishida J."/>
            <person name="Jiang P.X."/>
            <person name="Jones T."/>
            <person name="Kawai J."/>
            <person name="Kamiya A."/>
            <person name="Meyers C."/>
            <person name="Nakajima M."/>
            <person name="Narusaka M."/>
            <person name="Seki M."/>
            <person name="Sakurai T."/>
            <person name="Satou M."/>
            <person name="Tamse R."/>
            <person name="Vaysberg M."/>
            <person name="Wallender E.K."/>
            <person name="Wong C."/>
            <person name="Yamamura Y."/>
            <person name="Yuan S."/>
            <person name="Shinozaki K."/>
            <person name="Davis R.W."/>
            <person name="Theologis A."/>
            <person name="Ecker J.R."/>
        </authorList>
    </citation>
    <scope>NUCLEOTIDE SEQUENCE [LARGE SCALE MRNA]</scope>
    <source>
        <strain>cv. Columbia</strain>
    </source>
</reference>
<reference key="5">
    <citation type="journal article" date="1996" name="Plant Physiol.">
        <title>Novel molecular markers for late phases of the growth cycle of Arabidopsis thaliana cell-suspension cultures are expressed during organ senescence.</title>
        <authorList>
            <person name="Callard D."/>
            <person name="Axelos M."/>
            <person name="Mazzolini L."/>
        </authorList>
    </citation>
    <scope>NUCLEOTIDE SEQUENCE [MRNA] OF 27-88 AND 456-504</scope>
</reference>
<reference key="6">
    <citation type="journal article" date="2001" name="Physiol. Plantarum">
        <title>Dark-inducible genes from Arabidopsis thaliana are associated with leaf senescence and repressed by sugars.</title>
        <authorList>
            <person name="Fujiki Y."/>
            <person name="Yoshikawa Y."/>
            <person name="Sato T."/>
            <person name="Inada N."/>
            <person name="Ito M."/>
            <person name="Nishida I."/>
            <person name="Watanabe A."/>
        </authorList>
    </citation>
    <scope>INDUCTION</scope>
</reference>
<reference key="7">
    <citation type="journal article" date="2004" name="Plant Mol. Biol.">
        <title>Functional genomic analysis of Arabidopsis thaliana glycoside hydrolase family 1.</title>
        <authorList>
            <person name="Xu Z."/>
            <person name="Escamilla-Trevino L.L."/>
            <person name="Zeng L."/>
            <person name="Lalgondar M."/>
            <person name="Bevan D.R."/>
            <person name="Winkel B.S.J."/>
            <person name="Mohamed A."/>
            <person name="Cheng C.-L."/>
            <person name="Shih M.-C."/>
            <person name="Poulton J.E."/>
            <person name="Esen A."/>
        </authorList>
    </citation>
    <scope>GENE FAMILY</scope>
    <scope>NOMENCLATURE</scope>
</reference>
<accession>Q9M1C9</accession>
<accession>Q39225</accession>
<accession>Q39226</accession>
<accession>Q8L7I3</accession>
<accession>Q9ASR7</accession>
<accession>Q9FVM4</accession>
<protein>
    <recommendedName>
        <fullName evidence="11">Beta-glucosidase 30</fullName>
        <shortName evidence="11">AtBGLU30</shortName>
        <ecNumber evidence="1">3.2.1.21</ecNumber>
    </recommendedName>
    <alternativeName>
        <fullName evidence="9 10">Protein DARK INDUCIBLE 2</fullName>
    </alternativeName>
    <alternativeName>
        <fullName evidence="12">Protein SENESCENCE-RELATED GENE 2</fullName>
    </alternativeName>
</protein>